<name>CRH_BACSU</name>
<protein>
    <recommendedName>
        <fullName>HPr-like protein Crh</fullName>
    </recommendedName>
    <alternativeName>
        <fullName>Catabolite repression HPr</fullName>
    </alternativeName>
</protein>
<keyword id="KW-0002">3D-structure</keyword>
<keyword id="KW-0597">Phosphoprotein</keyword>
<keyword id="KW-1185">Reference proteome</keyword>
<proteinExistence type="evidence at protein level"/>
<dbReference type="EMBL" id="Z94043">
    <property type="protein sequence ID" value="CAB08060.1"/>
    <property type="molecule type" value="Genomic_DNA"/>
</dbReference>
<dbReference type="EMBL" id="AL009126">
    <property type="protein sequence ID" value="CAB15479.1"/>
    <property type="molecule type" value="Genomic_DNA"/>
</dbReference>
<dbReference type="PIR" id="D69607">
    <property type="entry name" value="D69607"/>
</dbReference>
<dbReference type="RefSeq" id="NP_391354.1">
    <property type="nucleotide sequence ID" value="NC_000964.3"/>
</dbReference>
<dbReference type="RefSeq" id="WP_003219835.1">
    <property type="nucleotide sequence ID" value="NZ_OZ025638.1"/>
</dbReference>
<dbReference type="PDB" id="1K1C">
    <property type="method" value="NMR"/>
    <property type="chains" value="A=2-85"/>
</dbReference>
<dbReference type="PDB" id="1MO1">
    <property type="method" value="X-ray"/>
    <property type="resolution" value="1.80 A"/>
    <property type="chains" value="A/B/C/D=1-85"/>
</dbReference>
<dbReference type="PDB" id="1MU4">
    <property type="method" value="X-ray"/>
    <property type="resolution" value="1.80 A"/>
    <property type="chains" value="A/B=1-85"/>
</dbReference>
<dbReference type="PDB" id="1ZVV">
    <property type="method" value="X-ray"/>
    <property type="resolution" value="2.98 A"/>
    <property type="chains" value="J/P/W=1-85"/>
</dbReference>
<dbReference type="PDB" id="2AK7">
    <property type="method" value="X-ray"/>
    <property type="resolution" value="2.00 A"/>
    <property type="chains" value="A/B=1-85"/>
</dbReference>
<dbReference type="PDB" id="2RLZ">
    <property type="method" value="NMR"/>
    <property type="chains" value="A/B=1-85"/>
</dbReference>
<dbReference type="PDBsum" id="1K1C"/>
<dbReference type="PDBsum" id="1MO1"/>
<dbReference type="PDBsum" id="1MU4"/>
<dbReference type="PDBsum" id="1ZVV"/>
<dbReference type="PDBsum" id="2AK7"/>
<dbReference type="PDBsum" id="2RLZ"/>
<dbReference type="BMRB" id="O06976"/>
<dbReference type="SMR" id="O06976"/>
<dbReference type="FunCoup" id="O06976">
    <property type="interactions" value="167"/>
</dbReference>
<dbReference type="IntAct" id="O06976">
    <property type="interactions" value="2"/>
</dbReference>
<dbReference type="STRING" id="224308.BSU34740"/>
<dbReference type="iPTMnet" id="O06976"/>
<dbReference type="PaxDb" id="224308-BSU34740"/>
<dbReference type="EnsemblBacteria" id="CAB15479">
    <property type="protein sequence ID" value="CAB15479"/>
    <property type="gene ID" value="BSU_34740"/>
</dbReference>
<dbReference type="GeneID" id="938474"/>
<dbReference type="KEGG" id="bsu:BSU34740"/>
<dbReference type="PATRIC" id="fig|224308.179.peg.3762"/>
<dbReference type="eggNOG" id="COG1925">
    <property type="taxonomic scope" value="Bacteria"/>
</dbReference>
<dbReference type="InParanoid" id="O06976"/>
<dbReference type="OrthoDB" id="9809047at2"/>
<dbReference type="PhylomeDB" id="O06976"/>
<dbReference type="BioCyc" id="BSUB:BSU34740-MONOMER"/>
<dbReference type="EvolutionaryTrace" id="O06976"/>
<dbReference type="PRO" id="PR:O06976"/>
<dbReference type="Proteomes" id="UP000001570">
    <property type="component" value="Chromosome"/>
</dbReference>
<dbReference type="GO" id="GO:0009401">
    <property type="term" value="P:phosphoenolpyruvate-dependent sugar phosphotransferase system"/>
    <property type="evidence" value="ECO:0000318"/>
    <property type="project" value="GO_Central"/>
</dbReference>
<dbReference type="CDD" id="cd00367">
    <property type="entry name" value="PTS-HPr_like"/>
    <property type="match status" value="1"/>
</dbReference>
<dbReference type="Gene3D" id="3.30.1340.10">
    <property type="entry name" value="HPr-like"/>
    <property type="match status" value="1"/>
</dbReference>
<dbReference type="InterPro" id="IPR050399">
    <property type="entry name" value="HPr"/>
</dbReference>
<dbReference type="InterPro" id="IPR000032">
    <property type="entry name" value="HPr-like"/>
</dbReference>
<dbReference type="InterPro" id="IPR035895">
    <property type="entry name" value="HPr-like_sf"/>
</dbReference>
<dbReference type="InterPro" id="IPR002114">
    <property type="entry name" value="PTS_HPr_Ser_P_site"/>
</dbReference>
<dbReference type="NCBIfam" id="NF010354">
    <property type="entry name" value="PRK13782.1"/>
    <property type="match status" value="1"/>
</dbReference>
<dbReference type="NCBIfam" id="TIGR01003">
    <property type="entry name" value="PTS_HPr_family"/>
    <property type="match status" value="1"/>
</dbReference>
<dbReference type="PANTHER" id="PTHR33705:SF5">
    <property type="entry name" value="HPR-LIKE PROTEIN CRH"/>
    <property type="match status" value="1"/>
</dbReference>
<dbReference type="PANTHER" id="PTHR33705">
    <property type="entry name" value="PHOSPHOCARRIER PROTEIN HPR"/>
    <property type="match status" value="1"/>
</dbReference>
<dbReference type="Pfam" id="PF00381">
    <property type="entry name" value="PTS-HPr"/>
    <property type="match status" value="1"/>
</dbReference>
<dbReference type="PRINTS" id="PR00107">
    <property type="entry name" value="PHOSPHOCPHPR"/>
</dbReference>
<dbReference type="SUPFAM" id="SSF55594">
    <property type="entry name" value="HPr-like"/>
    <property type="match status" value="1"/>
</dbReference>
<dbReference type="PROSITE" id="PS51350">
    <property type="entry name" value="PTS_HPR_DOM"/>
    <property type="match status" value="1"/>
</dbReference>
<dbReference type="PROSITE" id="PS00589">
    <property type="entry name" value="PTS_HPR_SER"/>
    <property type="match status" value="1"/>
</dbReference>
<organism>
    <name type="scientific">Bacillus subtilis (strain 168)</name>
    <dbReference type="NCBI Taxonomy" id="224308"/>
    <lineage>
        <taxon>Bacteria</taxon>
        <taxon>Bacillati</taxon>
        <taxon>Bacillota</taxon>
        <taxon>Bacilli</taxon>
        <taxon>Bacillales</taxon>
        <taxon>Bacillaceae</taxon>
        <taxon>Bacillus</taxon>
    </lineage>
</organism>
<evidence type="ECO:0000255" key="1">
    <source>
        <dbReference type="PROSITE-ProRule" id="PRU00681"/>
    </source>
</evidence>
<evidence type="ECO:0000269" key="2">
    <source>
    </source>
</evidence>
<evidence type="ECO:0000269" key="3">
    <source>
    </source>
</evidence>
<evidence type="ECO:0000269" key="4">
    <source>
    </source>
</evidence>
<evidence type="ECO:0000269" key="5">
    <source>
    </source>
</evidence>
<evidence type="ECO:0000269" key="6">
    <source>
    </source>
</evidence>
<evidence type="ECO:0000305" key="7"/>
<evidence type="ECO:0007829" key="8">
    <source>
        <dbReference type="PDB" id="1MO1"/>
    </source>
</evidence>
<feature type="chain" id="PRO_0000107899" description="HPr-like protein Crh">
    <location>
        <begin position="1"/>
        <end position="85"/>
    </location>
</feature>
<feature type="domain" description="HPr" evidence="1">
    <location>
        <begin position="1"/>
        <end position="85"/>
    </location>
</feature>
<feature type="modified residue" description="Phosphoserine; by HPrK/P" evidence="1 4 5">
    <location>
        <position position="46"/>
    </location>
</feature>
<feature type="mutagenesis site" description="Cannot fulfill its catalytic role within PTS transport. Does not affect dimerization." evidence="3">
    <original>Q</original>
    <variation>H</variation>
    <location>
        <position position="15"/>
    </location>
</feature>
<feature type="strand" evidence="8">
    <location>
        <begin position="2"/>
        <end position="7"/>
    </location>
</feature>
<feature type="strand" evidence="8">
    <location>
        <begin position="12"/>
        <end position="14"/>
    </location>
</feature>
<feature type="helix" evidence="8">
    <location>
        <begin position="16"/>
        <end position="26"/>
    </location>
</feature>
<feature type="strand" evidence="8">
    <location>
        <begin position="29"/>
        <end position="37"/>
    </location>
</feature>
<feature type="strand" evidence="8">
    <location>
        <begin position="40"/>
        <end position="43"/>
    </location>
</feature>
<feature type="helix" evidence="8">
    <location>
        <begin position="47"/>
        <end position="52"/>
    </location>
</feature>
<feature type="strand" evidence="8">
    <location>
        <begin position="60"/>
        <end position="67"/>
    </location>
</feature>
<feature type="helix" evidence="8">
    <location>
        <begin position="70"/>
        <end position="81"/>
    </location>
</feature>
<reference key="1">
    <citation type="submission" date="1997-04" db="EMBL/GenBank/DDBJ databases">
        <authorList>
            <person name="Denizot F."/>
        </authorList>
    </citation>
    <scope>NUCLEOTIDE SEQUENCE [GENOMIC DNA]</scope>
</reference>
<reference key="2">
    <citation type="journal article" date="1997" name="Nature">
        <title>The complete genome sequence of the Gram-positive bacterium Bacillus subtilis.</title>
        <authorList>
            <person name="Kunst F."/>
            <person name="Ogasawara N."/>
            <person name="Moszer I."/>
            <person name="Albertini A.M."/>
            <person name="Alloni G."/>
            <person name="Azevedo V."/>
            <person name="Bertero M.G."/>
            <person name="Bessieres P."/>
            <person name="Bolotin A."/>
            <person name="Borchert S."/>
            <person name="Borriss R."/>
            <person name="Boursier L."/>
            <person name="Brans A."/>
            <person name="Braun M."/>
            <person name="Brignell S.C."/>
            <person name="Bron S."/>
            <person name="Brouillet S."/>
            <person name="Bruschi C.V."/>
            <person name="Caldwell B."/>
            <person name="Capuano V."/>
            <person name="Carter N.M."/>
            <person name="Choi S.-K."/>
            <person name="Codani J.-J."/>
            <person name="Connerton I.F."/>
            <person name="Cummings N.J."/>
            <person name="Daniel R.A."/>
            <person name="Denizot F."/>
            <person name="Devine K.M."/>
            <person name="Duesterhoeft A."/>
            <person name="Ehrlich S.D."/>
            <person name="Emmerson P.T."/>
            <person name="Entian K.-D."/>
            <person name="Errington J."/>
            <person name="Fabret C."/>
            <person name="Ferrari E."/>
            <person name="Foulger D."/>
            <person name="Fritz C."/>
            <person name="Fujita M."/>
            <person name="Fujita Y."/>
            <person name="Fuma S."/>
            <person name="Galizzi A."/>
            <person name="Galleron N."/>
            <person name="Ghim S.-Y."/>
            <person name="Glaser P."/>
            <person name="Goffeau A."/>
            <person name="Golightly E.J."/>
            <person name="Grandi G."/>
            <person name="Guiseppi G."/>
            <person name="Guy B.J."/>
            <person name="Haga K."/>
            <person name="Haiech J."/>
            <person name="Harwood C.R."/>
            <person name="Henaut A."/>
            <person name="Hilbert H."/>
            <person name="Holsappel S."/>
            <person name="Hosono S."/>
            <person name="Hullo M.-F."/>
            <person name="Itaya M."/>
            <person name="Jones L.-M."/>
            <person name="Joris B."/>
            <person name="Karamata D."/>
            <person name="Kasahara Y."/>
            <person name="Klaerr-Blanchard M."/>
            <person name="Klein C."/>
            <person name="Kobayashi Y."/>
            <person name="Koetter P."/>
            <person name="Koningstein G."/>
            <person name="Krogh S."/>
            <person name="Kumano M."/>
            <person name="Kurita K."/>
            <person name="Lapidus A."/>
            <person name="Lardinois S."/>
            <person name="Lauber J."/>
            <person name="Lazarevic V."/>
            <person name="Lee S.-M."/>
            <person name="Levine A."/>
            <person name="Liu H."/>
            <person name="Masuda S."/>
            <person name="Mauel C."/>
            <person name="Medigue C."/>
            <person name="Medina N."/>
            <person name="Mellado R.P."/>
            <person name="Mizuno M."/>
            <person name="Moestl D."/>
            <person name="Nakai S."/>
            <person name="Noback M."/>
            <person name="Noone D."/>
            <person name="O'Reilly M."/>
            <person name="Ogawa K."/>
            <person name="Ogiwara A."/>
            <person name="Oudega B."/>
            <person name="Park S.-H."/>
            <person name="Parro V."/>
            <person name="Pohl T.M."/>
            <person name="Portetelle D."/>
            <person name="Porwollik S."/>
            <person name="Prescott A.M."/>
            <person name="Presecan E."/>
            <person name="Pujic P."/>
            <person name="Purnelle B."/>
            <person name="Rapoport G."/>
            <person name="Rey M."/>
            <person name="Reynolds S."/>
            <person name="Rieger M."/>
            <person name="Rivolta C."/>
            <person name="Rocha E."/>
            <person name="Roche B."/>
            <person name="Rose M."/>
            <person name="Sadaie Y."/>
            <person name="Sato T."/>
            <person name="Scanlan E."/>
            <person name="Schleich S."/>
            <person name="Schroeter R."/>
            <person name="Scoffone F."/>
            <person name="Sekiguchi J."/>
            <person name="Sekowska A."/>
            <person name="Seror S.J."/>
            <person name="Serror P."/>
            <person name="Shin B.-S."/>
            <person name="Soldo B."/>
            <person name="Sorokin A."/>
            <person name="Tacconi E."/>
            <person name="Takagi T."/>
            <person name="Takahashi H."/>
            <person name="Takemaru K."/>
            <person name="Takeuchi M."/>
            <person name="Tamakoshi A."/>
            <person name="Tanaka T."/>
            <person name="Terpstra P."/>
            <person name="Tognoni A."/>
            <person name="Tosato V."/>
            <person name="Uchiyama S."/>
            <person name="Vandenbol M."/>
            <person name="Vannier F."/>
            <person name="Vassarotti A."/>
            <person name="Viari A."/>
            <person name="Wambutt R."/>
            <person name="Wedler E."/>
            <person name="Wedler H."/>
            <person name="Weitzenegger T."/>
            <person name="Winters P."/>
            <person name="Wipat A."/>
            <person name="Yamamoto H."/>
            <person name="Yamane K."/>
            <person name="Yasumoto K."/>
            <person name="Yata K."/>
            <person name="Yoshida K."/>
            <person name="Yoshikawa H.-F."/>
            <person name="Zumstein E."/>
            <person name="Yoshikawa H."/>
            <person name="Danchin A."/>
        </authorList>
    </citation>
    <scope>NUCLEOTIDE SEQUENCE [LARGE SCALE GENOMIC DNA]</scope>
    <source>
        <strain>168</strain>
    </source>
</reference>
<reference key="3">
    <citation type="journal article" date="1997" name="Proc. Natl. Acad. Sci. U.S.A.">
        <title>The Bacillus subtilis crh gene encodes a HPr-like protein involved in carbon catabolite repression.</title>
        <authorList>
            <person name="Galinier A."/>
            <person name="Haiech J."/>
            <person name="Kilhoffer M.-C."/>
            <person name="Jaquinod M."/>
            <person name="Stuelke J."/>
            <person name="Deutscher J."/>
            <person name="Martin-Verstraete I."/>
        </authorList>
    </citation>
    <scope>FUNCTION</scope>
    <scope>PHOSPHORYLATION</scope>
    <source>
        <strain>QB5081</strain>
    </source>
</reference>
<reference key="4">
    <citation type="journal article" date="2002" name="J. Mol. Biol.">
        <title>Solution structure and dynamics of Crh, the Bacillus subtilis catabolite repression HPr.</title>
        <authorList>
            <person name="Favier A."/>
            <person name="Brutscher B."/>
            <person name="Blackledge M."/>
            <person name="Galinier A."/>
            <person name="Deutscher J."/>
            <person name="Penin F."/>
            <person name="Marion D."/>
        </authorList>
    </citation>
    <scope>STRUCTURE BY NMR OF 2-85</scope>
    <scope>SUBUNIT</scope>
</reference>
<reference key="5">
    <citation type="submission" date="2002-09" db="PDB data bank">
        <title>Crystal Structure at 1.8 A of the Bacillus subtilis catabolite repression containing protein (Crh) reveals an unexpected swapping domain as an untertwinned dimer.</title>
        <authorList>
            <person name="Juy M.R."/>
            <person name="Bockmann A."/>
            <person name="Galinier A."/>
            <person name="Penin F."/>
            <person name="Haser R."/>
        </authorList>
    </citation>
    <scope>X-RAY CRYSTALLOGRAPHY (1.80 ANGSTROMS)</scope>
</reference>
<reference key="6">
    <citation type="journal article" date="2003" name="J. Mol. Biol.">
        <title>Dimerization of Crh by reversible 3D domain swapping induces structural adjustments to its monomeric homologue Hpr.</title>
        <authorList>
            <person name="Juy M."/>
            <person name="Penin F."/>
            <person name="Favier A."/>
            <person name="Galinier A."/>
            <person name="Montserret R."/>
            <person name="Haser R."/>
            <person name="Deutscher J."/>
            <person name="Bockmann A."/>
        </authorList>
    </citation>
    <scope>X-RAY CRYSTALLOGRAPHY (1.80 ANGSTROMS)</scope>
    <scope>MUTAGENESIS OF GLN-15</scope>
</reference>
<reference key="7">
    <citation type="journal article" date="2006" name="J. Biol. Chem.">
        <title>Phosphoprotein Crh-Ser46-P displays altered binding to CcpA to effect carbon catabolite regulation.</title>
        <authorList>
            <person name="Schumacher M.A."/>
            <person name="Seidel G."/>
            <person name="Hillen W."/>
            <person name="Brennan R.G."/>
        </authorList>
    </citation>
    <scope>X-RAY CRYSTALLOGRAPHY (2.98 ANGSTROMS) IN COMPLEX WITH CCPA</scope>
    <scope>FUNCTION</scope>
    <scope>SUBUNIT</scope>
    <scope>PHOSPHORYLATION AT SER-46</scope>
</reference>
<reference key="8">
    <citation type="journal article" date="2006" name="Proteins">
        <title>X-ray structure of a domain-swapped dimer of Ser46-phosphorylated Crh from Bacillus subtilis.</title>
        <authorList>
            <person name="Chaptal V."/>
            <person name="Lariviere L."/>
            <person name="Gueguen-Chaignon V."/>
            <person name="Galinier A."/>
            <person name="Nessler S."/>
            <person name="Morera S."/>
        </authorList>
    </citation>
    <scope>X-RAY CRYSTALLOGRAPHY (2.00 ANGSTROMS)</scope>
    <scope>PHOSPHORYLATION AT SER-46</scope>
</reference>
<reference key="9">
    <citation type="journal article" date="2008" name="J. Am. Chem. Soc.">
        <title>3D structure determination of the Crh protein from highly ambiguous solid-state NMR restraints.</title>
        <authorList>
            <person name="Loquet A."/>
            <person name="Bardiaux B."/>
            <person name="Gardiennet C."/>
            <person name="Blanchet C."/>
            <person name="Baldus M."/>
            <person name="Nilges M."/>
            <person name="Malliavin T."/>
            <person name="Bockmann A."/>
        </authorList>
    </citation>
    <scope>STRUCTURE BY NMR</scope>
</reference>
<comment type="function">
    <text evidence="4 6">Along with seryl-phosphorylated HPr, phosphorylated Crh is implicated in carbon catabolite repression (CCR) of levanase, inositol dehydrogenase, and beta-xylosidase. Exerts its effect on CCR by interacting with CcpA.</text>
</comment>
<comment type="subunit">
    <text evidence="2 4">Mixture of monomers and homodimers. Interacts with CcpA as a monomer.</text>
</comment>
<comment type="miscellaneous">
    <text>Not phosphorylated by PEP and by enzyme I.</text>
</comment>
<comment type="similarity">
    <text evidence="7">Belongs to the HPr family.</text>
</comment>
<sequence>MVQQKVEVRLKTGLQARPAALFVQEANRFTSDVFLEKDGKKVNAKSIMGLMSLAVSTGTEVTLIAQGEDEQEALEKLAAYVQEEV</sequence>
<gene>
    <name type="primary">crh</name>
    <name type="synonym">yvcM</name>
    <name type="ordered locus">BSU34740</name>
</gene>
<accession>O06976</accession>